<sequence>MNKQIQTEADELGFFGEYGGQYVPETLMPAIIELKKAYKEAKADPEFQRELEYYLSEYVGRATPLTYAASYTESLGGAKIYLKREDLNHTGAHKINNALGQALLAKRMGKKKLVAETGAGQHGVASATVAALFDMELVVFMGSEDIKRQQLNVFRMELLGAKVVAVEEGQGTLSDAVNKALQYWVSHVDDTHYLLGSALGPDPFPTIVRDFQSVIGKEIKSQILKKEGRLPDAIVACIGGGSNAIGTFYPFIKDDVALYGVEAAGQGEDTDKHALAIGKGSPGVLHGTKMYLIQDEGGQVQLAHSISAGLDYPGIGPEHSYYHDIGRVTFENASDTQAMNALINFTKHEGIIPAIESAHALSYVERLAPTMSKEDIIVVTISGRGDKDMETIRQYMAERGLAND</sequence>
<reference key="1">
    <citation type="submission" date="2007-06" db="EMBL/GenBank/DDBJ databases">
        <title>Complete sequence of chromosome of Staphylococcus aureus subsp. aureus JH1.</title>
        <authorList>
            <consortium name="US DOE Joint Genome Institute"/>
            <person name="Copeland A."/>
            <person name="Lucas S."/>
            <person name="Lapidus A."/>
            <person name="Barry K."/>
            <person name="Detter J.C."/>
            <person name="Glavina del Rio T."/>
            <person name="Hammon N."/>
            <person name="Israni S."/>
            <person name="Dalin E."/>
            <person name="Tice H."/>
            <person name="Pitluck S."/>
            <person name="Chain P."/>
            <person name="Malfatti S."/>
            <person name="Shin M."/>
            <person name="Vergez L."/>
            <person name="Schmutz J."/>
            <person name="Larimer F."/>
            <person name="Land M."/>
            <person name="Hauser L."/>
            <person name="Kyrpides N."/>
            <person name="Ivanova N."/>
            <person name="Tomasz A."/>
            <person name="Richardson P."/>
        </authorList>
    </citation>
    <scope>NUCLEOTIDE SEQUENCE [LARGE SCALE GENOMIC DNA]</scope>
    <source>
        <strain>JH1</strain>
    </source>
</reference>
<evidence type="ECO:0000255" key="1">
    <source>
        <dbReference type="HAMAP-Rule" id="MF_00133"/>
    </source>
</evidence>
<keyword id="KW-0028">Amino-acid biosynthesis</keyword>
<keyword id="KW-0057">Aromatic amino acid biosynthesis</keyword>
<keyword id="KW-0456">Lyase</keyword>
<keyword id="KW-0663">Pyridoxal phosphate</keyword>
<keyword id="KW-0822">Tryptophan biosynthesis</keyword>
<dbReference type="EC" id="4.2.1.20" evidence="1"/>
<dbReference type="EMBL" id="CP000736">
    <property type="protein sequence ID" value="ABR52312.1"/>
    <property type="molecule type" value="Genomic_DNA"/>
</dbReference>
<dbReference type="SMR" id="A6U1J4"/>
<dbReference type="KEGG" id="sah:SaurJH1_1462"/>
<dbReference type="HOGENOM" id="CLU_016734_3_1_9"/>
<dbReference type="UniPathway" id="UPA00035">
    <property type="reaction ID" value="UER00044"/>
</dbReference>
<dbReference type="GO" id="GO:0005737">
    <property type="term" value="C:cytoplasm"/>
    <property type="evidence" value="ECO:0007669"/>
    <property type="project" value="TreeGrafter"/>
</dbReference>
<dbReference type="GO" id="GO:0004834">
    <property type="term" value="F:tryptophan synthase activity"/>
    <property type="evidence" value="ECO:0007669"/>
    <property type="project" value="UniProtKB-UniRule"/>
</dbReference>
<dbReference type="CDD" id="cd06446">
    <property type="entry name" value="Trp-synth_B"/>
    <property type="match status" value="1"/>
</dbReference>
<dbReference type="FunFam" id="3.40.50.1100:FF:000001">
    <property type="entry name" value="Tryptophan synthase beta chain"/>
    <property type="match status" value="1"/>
</dbReference>
<dbReference type="FunFam" id="3.40.50.1100:FF:000004">
    <property type="entry name" value="Tryptophan synthase beta chain"/>
    <property type="match status" value="1"/>
</dbReference>
<dbReference type="Gene3D" id="3.40.50.1100">
    <property type="match status" value="2"/>
</dbReference>
<dbReference type="HAMAP" id="MF_00133">
    <property type="entry name" value="Trp_synth_beta"/>
    <property type="match status" value="1"/>
</dbReference>
<dbReference type="InterPro" id="IPR006653">
    <property type="entry name" value="Trp_synth_b_CS"/>
</dbReference>
<dbReference type="InterPro" id="IPR006654">
    <property type="entry name" value="Trp_synth_beta"/>
</dbReference>
<dbReference type="InterPro" id="IPR023026">
    <property type="entry name" value="Trp_synth_beta/beta-like"/>
</dbReference>
<dbReference type="InterPro" id="IPR001926">
    <property type="entry name" value="TrpB-like_PALP"/>
</dbReference>
<dbReference type="InterPro" id="IPR036052">
    <property type="entry name" value="TrpB-like_PALP_sf"/>
</dbReference>
<dbReference type="NCBIfam" id="TIGR00263">
    <property type="entry name" value="trpB"/>
    <property type="match status" value="1"/>
</dbReference>
<dbReference type="PANTHER" id="PTHR48077:SF3">
    <property type="entry name" value="TRYPTOPHAN SYNTHASE"/>
    <property type="match status" value="1"/>
</dbReference>
<dbReference type="PANTHER" id="PTHR48077">
    <property type="entry name" value="TRYPTOPHAN SYNTHASE-RELATED"/>
    <property type="match status" value="1"/>
</dbReference>
<dbReference type="Pfam" id="PF00291">
    <property type="entry name" value="PALP"/>
    <property type="match status" value="1"/>
</dbReference>
<dbReference type="PIRSF" id="PIRSF001413">
    <property type="entry name" value="Trp_syn_beta"/>
    <property type="match status" value="1"/>
</dbReference>
<dbReference type="SUPFAM" id="SSF53686">
    <property type="entry name" value="Tryptophan synthase beta subunit-like PLP-dependent enzymes"/>
    <property type="match status" value="1"/>
</dbReference>
<dbReference type="PROSITE" id="PS00168">
    <property type="entry name" value="TRP_SYNTHASE_BETA"/>
    <property type="match status" value="1"/>
</dbReference>
<gene>
    <name evidence="1" type="primary">trpB</name>
    <name type="ordered locus">SaurJH1_1462</name>
</gene>
<proteinExistence type="inferred from homology"/>
<protein>
    <recommendedName>
        <fullName evidence="1">Tryptophan synthase beta chain</fullName>
        <ecNumber evidence="1">4.2.1.20</ecNumber>
    </recommendedName>
</protein>
<organism>
    <name type="scientific">Staphylococcus aureus (strain JH1)</name>
    <dbReference type="NCBI Taxonomy" id="359787"/>
    <lineage>
        <taxon>Bacteria</taxon>
        <taxon>Bacillati</taxon>
        <taxon>Bacillota</taxon>
        <taxon>Bacilli</taxon>
        <taxon>Bacillales</taxon>
        <taxon>Staphylococcaceae</taxon>
        <taxon>Staphylococcus</taxon>
    </lineage>
</organism>
<accession>A6U1J4</accession>
<feature type="chain" id="PRO_1000076409" description="Tryptophan synthase beta chain">
    <location>
        <begin position="1"/>
        <end position="404"/>
    </location>
</feature>
<feature type="modified residue" description="N6-(pyridoxal phosphate)lysine" evidence="1">
    <location>
        <position position="94"/>
    </location>
</feature>
<name>TRPB_STAA2</name>
<comment type="function">
    <text evidence="1">The beta subunit is responsible for the synthesis of L-tryptophan from indole and L-serine.</text>
</comment>
<comment type="catalytic activity">
    <reaction evidence="1">
        <text>(1S,2R)-1-C-(indol-3-yl)glycerol 3-phosphate + L-serine = D-glyceraldehyde 3-phosphate + L-tryptophan + H2O</text>
        <dbReference type="Rhea" id="RHEA:10532"/>
        <dbReference type="ChEBI" id="CHEBI:15377"/>
        <dbReference type="ChEBI" id="CHEBI:33384"/>
        <dbReference type="ChEBI" id="CHEBI:57912"/>
        <dbReference type="ChEBI" id="CHEBI:58866"/>
        <dbReference type="ChEBI" id="CHEBI:59776"/>
        <dbReference type="EC" id="4.2.1.20"/>
    </reaction>
</comment>
<comment type="cofactor">
    <cofactor evidence="1">
        <name>pyridoxal 5'-phosphate</name>
        <dbReference type="ChEBI" id="CHEBI:597326"/>
    </cofactor>
</comment>
<comment type="pathway">
    <text evidence="1">Amino-acid biosynthesis; L-tryptophan biosynthesis; L-tryptophan from chorismate: step 5/5.</text>
</comment>
<comment type="subunit">
    <text evidence="1">Tetramer of two alpha and two beta chains.</text>
</comment>
<comment type="similarity">
    <text evidence="1">Belongs to the TrpB family.</text>
</comment>